<name>NDK_RICPR</name>
<evidence type="ECO:0000255" key="1">
    <source>
        <dbReference type="HAMAP-Rule" id="MF_00451"/>
    </source>
</evidence>
<evidence type="ECO:0000305" key="2"/>
<gene>
    <name evidence="1" type="primary">ndk</name>
    <name type="ordered locus">RP055</name>
</gene>
<comment type="function">
    <text evidence="1">Major role in the synthesis of nucleoside triphosphates other than ATP. The ATP gamma phosphate is transferred to the NDP beta phosphate via a ping-pong mechanism, using a phosphorylated active-site intermediate.</text>
</comment>
<comment type="catalytic activity">
    <reaction evidence="1">
        <text>a 2'-deoxyribonucleoside 5'-diphosphate + ATP = a 2'-deoxyribonucleoside 5'-triphosphate + ADP</text>
        <dbReference type="Rhea" id="RHEA:44640"/>
        <dbReference type="ChEBI" id="CHEBI:30616"/>
        <dbReference type="ChEBI" id="CHEBI:61560"/>
        <dbReference type="ChEBI" id="CHEBI:73316"/>
        <dbReference type="ChEBI" id="CHEBI:456216"/>
        <dbReference type="EC" id="2.7.4.6"/>
    </reaction>
</comment>
<comment type="catalytic activity">
    <reaction evidence="1">
        <text>a ribonucleoside 5'-diphosphate + ATP = a ribonucleoside 5'-triphosphate + ADP</text>
        <dbReference type="Rhea" id="RHEA:18113"/>
        <dbReference type="ChEBI" id="CHEBI:30616"/>
        <dbReference type="ChEBI" id="CHEBI:57930"/>
        <dbReference type="ChEBI" id="CHEBI:61557"/>
        <dbReference type="ChEBI" id="CHEBI:456216"/>
        <dbReference type="EC" id="2.7.4.6"/>
    </reaction>
</comment>
<comment type="cofactor">
    <cofactor evidence="1">
        <name>Mg(2+)</name>
        <dbReference type="ChEBI" id="CHEBI:18420"/>
    </cofactor>
</comment>
<comment type="subunit">
    <text evidence="1">Homotetramer.</text>
</comment>
<comment type="subcellular location">
    <subcellularLocation>
        <location evidence="1">Cytoplasm</location>
    </subcellularLocation>
</comment>
<comment type="similarity">
    <text evidence="1 2">Belongs to the NDK family.</text>
</comment>
<proteinExistence type="inferred from homology"/>
<organism>
    <name type="scientific">Rickettsia prowazekii (strain Madrid E)</name>
    <dbReference type="NCBI Taxonomy" id="272947"/>
    <lineage>
        <taxon>Bacteria</taxon>
        <taxon>Pseudomonadati</taxon>
        <taxon>Pseudomonadota</taxon>
        <taxon>Alphaproteobacteria</taxon>
        <taxon>Rickettsiales</taxon>
        <taxon>Rickettsiaceae</taxon>
        <taxon>Rickettsieae</taxon>
        <taxon>Rickettsia</taxon>
        <taxon>typhus group</taxon>
    </lineage>
</organism>
<sequence>MTIQYTFSMIKPDVIKRNKIGQVNTYLENAGLKIVAQKMKFLTKYEAECFYDEHRARSFFNSLVEYITSGAVVLQVLKGEDAITLNRTIMGATNPAEAKEGTIRKDLGESIEANSIHGSDSENSAKREIKFFFSKSEIIE</sequence>
<keyword id="KW-0067">ATP-binding</keyword>
<keyword id="KW-0963">Cytoplasm</keyword>
<keyword id="KW-0418">Kinase</keyword>
<keyword id="KW-0460">Magnesium</keyword>
<keyword id="KW-0479">Metal-binding</keyword>
<keyword id="KW-0546">Nucleotide metabolism</keyword>
<keyword id="KW-0547">Nucleotide-binding</keyword>
<keyword id="KW-0597">Phosphoprotein</keyword>
<keyword id="KW-1185">Reference proteome</keyword>
<keyword id="KW-0808">Transferase</keyword>
<accession>Q9ZE91</accession>
<feature type="chain" id="PRO_0000137035" description="Nucleoside diphosphate kinase">
    <location>
        <begin position="1"/>
        <end position="140"/>
    </location>
</feature>
<feature type="active site" description="Pros-phosphohistidine intermediate" evidence="1">
    <location>
        <position position="117"/>
    </location>
</feature>
<feature type="binding site" evidence="1">
    <location>
        <position position="11"/>
    </location>
    <ligand>
        <name>ATP</name>
        <dbReference type="ChEBI" id="CHEBI:30616"/>
    </ligand>
</feature>
<feature type="binding site" evidence="1">
    <location>
        <position position="59"/>
    </location>
    <ligand>
        <name>ATP</name>
        <dbReference type="ChEBI" id="CHEBI:30616"/>
    </ligand>
</feature>
<feature type="binding site" evidence="1">
    <location>
        <position position="87"/>
    </location>
    <ligand>
        <name>ATP</name>
        <dbReference type="ChEBI" id="CHEBI:30616"/>
    </ligand>
</feature>
<feature type="binding site" evidence="1">
    <location>
        <position position="93"/>
    </location>
    <ligand>
        <name>ATP</name>
        <dbReference type="ChEBI" id="CHEBI:30616"/>
    </ligand>
</feature>
<feature type="binding site" evidence="1">
    <location>
        <position position="104"/>
    </location>
    <ligand>
        <name>ATP</name>
        <dbReference type="ChEBI" id="CHEBI:30616"/>
    </ligand>
</feature>
<feature type="binding site" evidence="1">
    <location>
        <position position="114"/>
    </location>
    <ligand>
        <name>ATP</name>
        <dbReference type="ChEBI" id="CHEBI:30616"/>
    </ligand>
</feature>
<dbReference type="EC" id="2.7.4.6" evidence="1"/>
<dbReference type="EMBL" id="AJ235270">
    <property type="protein sequence ID" value="CAA14526.1"/>
    <property type="molecule type" value="Genomic_DNA"/>
</dbReference>
<dbReference type="PIR" id="G71713">
    <property type="entry name" value="G71713"/>
</dbReference>
<dbReference type="RefSeq" id="NP_220449.1">
    <property type="nucleotide sequence ID" value="NC_000963.1"/>
</dbReference>
<dbReference type="RefSeq" id="WP_010886200.1">
    <property type="nucleotide sequence ID" value="NC_000963.1"/>
</dbReference>
<dbReference type="SMR" id="Q9ZE91"/>
<dbReference type="STRING" id="272947.gene:17555138"/>
<dbReference type="EnsemblBacteria" id="CAA14526">
    <property type="protein sequence ID" value="CAA14526"/>
    <property type="gene ID" value="CAA14526"/>
</dbReference>
<dbReference type="KEGG" id="rpr:RP055"/>
<dbReference type="PATRIC" id="fig|272947.5.peg.56"/>
<dbReference type="eggNOG" id="COG0105">
    <property type="taxonomic scope" value="Bacteria"/>
</dbReference>
<dbReference type="HOGENOM" id="CLU_060216_6_3_5"/>
<dbReference type="OrthoDB" id="9801161at2"/>
<dbReference type="Proteomes" id="UP000002480">
    <property type="component" value="Chromosome"/>
</dbReference>
<dbReference type="GO" id="GO:0005737">
    <property type="term" value="C:cytoplasm"/>
    <property type="evidence" value="ECO:0007669"/>
    <property type="project" value="UniProtKB-SubCell"/>
</dbReference>
<dbReference type="GO" id="GO:0005524">
    <property type="term" value="F:ATP binding"/>
    <property type="evidence" value="ECO:0007669"/>
    <property type="project" value="UniProtKB-UniRule"/>
</dbReference>
<dbReference type="GO" id="GO:0046872">
    <property type="term" value="F:metal ion binding"/>
    <property type="evidence" value="ECO:0007669"/>
    <property type="project" value="UniProtKB-KW"/>
</dbReference>
<dbReference type="GO" id="GO:0004550">
    <property type="term" value="F:nucleoside diphosphate kinase activity"/>
    <property type="evidence" value="ECO:0007669"/>
    <property type="project" value="UniProtKB-UniRule"/>
</dbReference>
<dbReference type="GO" id="GO:0006241">
    <property type="term" value="P:CTP biosynthetic process"/>
    <property type="evidence" value="ECO:0007669"/>
    <property type="project" value="UniProtKB-UniRule"/>
</dbReference>
<dbReference type="GO" id="GO:0006183">
    <property type="term" value="P:GTP biosynthetic process"/>
    <property type="evidence" value="ECO:0007669"/>
    <property type="project" value="UniProtKB-UniRule"/>
</dbReference>
<dbReference type="GO" id="GO:0006228">
    <property type="term" value="P:UTP biosynthetic process"/>
    <property type="evidence" value="ECO:0007669"/>
    <property type="project" value="UniProtKB-UniRule"/>
</dbReference>
<dbReference type="CDD" id="cd04413">
    <property type="entry name" value="NDPk_I"/>
    <property type="match status" value="1"/>
</dbReference>
<dbReference type="FunFam" id="3.30.70.141:FF:000003">
    <property type="entry name" value="Nucleoside diphosphate kinase"/>
    <property type="match status" value="1"/>
</dbReference>
<dbReference type="Gene3D" id="3.30.70.141">
    <property type="entry name" value="Nucleoside diphosphate kinase-like domain"/>
    <property type="match status" value="1"/>
</dbReference>
<dbReference type="HAMAP" id="MF_00451">
    <property type="entry name" value="NDP_kinase"/>
    <property type="match status" value="1"/>
</dbReference>
<dbReference type="InterPro" id="IPR034907">
    <property type="entry name" value="NDK-like_dom"/>
</dbReference>
<dbReference type="InterPro" id="IPR036850">
    <property type="entry name" value="NDK-like_dom_sf"/>
</dbReference>
<dbReference type="InterPro" id="IPR001564">
    <property type="entry name" value="Nucleoside_diP_kinase"/>
</dbReference>
<dbReference type="InterPro" id="IPR023005">
    <property type="entry name" value="Nucleoside_diP_kinase_AS"/>
</dbReference>
<dbReference type="NCBIfam" id="NF001908">
    <property type="entry name" value="PRK00668.1"/>
    <property type="match status" value="1"/>
</dbReference>
<dbReference type="PANTHER" id="PTHR46161">
    <property type="entry name" value="NUCLEOSIDE DIPHOSPHATE KINASE"/>
    <property type="match status" value="1"/>
</dbReference>
<dbReference type="PANTHER" id="PTHR46161:SF3">
    <property type="entry name" value="NUCLEOSIDE DIPHOSPHATE KINASE DDB_G0292928-RELATED"/>
    <property type="match status" value="1"/>
</dbReference>
<dbReference type="Pfam" id="PF00334">
    <property type="entry name" value="NDK"/>
    <property type="match status" value="1"/>
</dbReference>
<dbReference type="PRINTS" id="PR01243">
    <property type="entry name" value="NUCDPKINASE"/>
</dbReference>
<dbReference type="SMART" id="SM00562">
    <property type="entry name" value="NDK"/>
    <property type="match status" value="1"/>
</dbReference>
<dbReference type="SUPFAM" id="SSF54919">
    <property type="entry name" value="Nucleoside diphosphate kinase, NDK"/>
    <property type="match status" value="1"/>
</dbReference>
<dbReference type="PROSITE" id="PS00469">
    <property type="entry name" value="NDPK"/>
    <property type="match status" value="1"/>
</dbReference>
<dbReference type="PROSITE" id="PS51374">
    <property type="entry name" value="NDPK_LIKE"/>
    <property type="match status" value="1"/>
</dbReference>
<protein>
    <recommendedName>
        <fullName evidence="1">Nucleoside diphosphate kinase</fullName>
        <shortName evidence="1">NDK</shortName>
        <shortName evidence="1">NDP kinase</shortName>
        <ecNumber evidence="1">2.7.4.6</ecNumber>
    </recommendedName>
    <alternativeName>
        <fullName evidence="1">Nucleoside-2-P kinase</fullName>
    </alternativeName>
</protein>
<reference key="1">
    <citation type="journal article" date="1998" name="Nature">
        <title>The genome sequence of Rickettsia prowazekii and the origin of mitochondria.</title>
        <authorList>
            <person name="Andersson S.G.E."/>
            <person name="Zomorodipour A."/>
            <person name="Andersson J.O."/>
            <person name="Sicheritz-Ponten T."/>
            <person name="Alsmark U.C.M."/>
            <person name="Podowski R.M."/>
            <person name="Naeslund A.K."/>
            <person name="Eriksson A.-S."/>
            <person name="Winkler H.H."/>
            <person name="Kurland C.G."/>
        </authorList>
    </citation>
    <scope>NUCLEOTIDE SEQUENCE [LARGE SCALE GENOMIC DNA]</scope>
    <source>
        <strain>Madrid E</strain>
    </source>
</reference>